<proteinExistence type="evidence at protein level"/>
<protein>
    <recommendedName>
        <fullName>Keratocan</fullName>
        <shortName>KTN</shortName>
    </recommendedName>
    <alternativeName>
        <fullName>Keratan sulfate proteoglycan keratocan</fullName>
    </alternativeName>
</protein>
<comment type="function">
    <text>Plays an important role in generating and maintaining a transparent matrix within the corneal stroma.</text>
</comment>
<comment type="subcellular location">
    <subcellularLocation>
        <location>Secreted</location>
        <location>Extracellular space</location>
        <location>Extracellular matrix</location>
    </subcellularLocation>
</comment>
<comment type="PTM">
    <text>Binds keratan sulfate chains.</text>
</comment>
<comment type="similarity">
    <text evidence="4">Belongs to the small leucine-rich proteoglycan (SLRP) family. SLRP class II subfamily.</text>
</comment>
<dbReference type="EMBL" id="AF022890">
    <property type="protein sequence ID" value="AAC15506.1"/>
    <property type="molecule type" value="mRNA"/>
</dbReference>
<dbReference type="RefSeq" id="NP_989507.1">
    <property type="nucleotide sequence ID" value="NM_204176.2"/>
</dbReference>
<dbReference type="RefSeq" id="XP_015139177.1">
    <property type="nucleotide sequence ID" value="XM_015283691.1"/>
</dbReference>
<dbReference type="RefSeq" id="XP_015139185.1">
    <property type="nucleotide sequence ID" value="XM_015283699.1"/>
</dbReference>
<dbReference type="RefSeq" id="XP_015139192.1">
    <property type="nucleotide sequence ID" value="XM_015283706.4"/>
</dbReference>
<dbReference type="RefSeq" id="XP_040553901.1">
    <property type="nucleotide sequence ID" value="XM_040697967.2"/>
</dbReference>
<dbReference type="RefSeq" id="XP_046762281.1">
    <property type="nucleotide sequence ID" value="XM_046906325.1"/>
</dbReference>
<dbReference type="RefSeq" id="XP_046762282.1">
    <property type="nucleotide sequence ID" value="XM_046906326.1"/>
</dbReference>
<dbReference type="SMR" id="O42235"/>
<dbReference type="FunCoup" id="O42235">
    <property type="interactions" value="2"/>
</dbReference>
<dbReference type="STRING" id="9031.ENSGALP00000064476"/>
<dbReference type="GlyCosmos" id="O42235">
    <property type="glycosylation" value="5 sites, No reported glycans"/>
</dbReference>
<dbReference type="GlyGen" id="O42235">
    <property type="glycosylation" value="5 sites"/>
</dbReference>
<dbReference type="iPTMnet" id="O42235"/>
<dbReference type="PaxDb" id="9031-ENSGALP00000018369"/>
<dbReference type="Ensembl" id="ENSGALT00010032044.1">
    <property type="protein sequence ID" value="ENSGALP00010018834.1"/>
    <property type="gene ID" value="ENSGALG00010013318.1"/>
</dbReference>
<dbReference type="GeneID" id="373995"/>
<dbReference type="KEGG" id="gga:373995"/>
<dbReference type="CTD" id="11081"/>
<dbReference type="VEuPathDB" id="HostDB:geneid_373995"/>
<dbReference type="eggNOG" id="KOG0619">
    <property type="taxonomic scope" value="Eukaryota"/>
</dbReference>
<dbReference type="GeneTree" id="ENSGT00940000158968"/>
<dbReference type="HOGENOM" id="CLU_000288_186_4_1"/>
<dbReference type="InParanoid" id="O42235"/>
<dbReference type="OMA" id="MECFCPP"/>
<dbReference type="OrthoDB" id="5789657at2759"/>
<dbReference type="PhylomeDB" id="O42235"/>
<dbReference type="TreeFam" id="TF334562"/>
<dbReference type="Reactome" id="R-GGA-2022854">
    <property type="pathway name" value="Keratan sulfate biosynthesis"/>
</dbReference>
<dbReference type="Reactome" id="R-GGA-2022857">
    <property type="pathway name" value="Keratan sulfate degradation"/>
</dbReference>
<dbReference type="PRO" id="PR:O42235"/>
<dbReference type="Proteomes" id="UP000000539">
    <property type="component" value="Chromosome 1"/>
</dbReference>
<dbReference type="Bgee" id="ENSGALG00000011270">
    <property type="expression patterns" value="Expressed in cerebellum"/>
</dbReference>
<dbReference type="GO" id="GO:0005615">
    <property type="term" value="C:extracellular space"/>
    <property type="evidence" value="ECO:0000318"/>
    <property type="project" value="GO_Central"/>
</dbReference>
<dbReference type="FunFam" id="3.80.10.10:FF:000092">
    <property type="entry name" value="keratocan isoform X1"/>
    <property type="match status" value="1"/>
</dbReference>
<dbReference type="FunFam" id="3.80.10.10:FF:000133">
    <property type="entry name" value="prolargin"/>
    <property type="match status" value="1"/>
</dbReference>
<dbReference type="Gene3D" id="3.80.10.10">
    <property type="entry name" value="Ribonuclease Inhibitor"/>
    <property type="match status" value="3"/>
</dbReference>
<dbReference type="InterPro" id="IPR001611">
    <property type="entry name" value="Leu-rich_rpt"/>
</dbReference>
<dbReference type="InterPro" id="IPR003591">
    <property type="entry name" value="Leu-rich_rpt_typical-subtyp"/>
</dbReference>
<dbReference type="InterPro" id="IPR032675">
    <property type="entry name" value="LRR_dom_sf"/>
</dbReference>
<dbReference type="InterPro" id="IPR000372">
    <property type="entry name" value="LRRNT"/>
</dbReference>
<dbReference type="InterPro" id="IPR050333">
    <property type="entry name" value="SLRP"/>
</dbReference>
<dbReference type="PANTHER" id="PTHR45712">
    <property type="entry name" value="AGAP008170-PA"/>
    <property type="match status" value="1"/>
</dbReference>
<dbReference type="PANTHER" id="PTHR45712:SF13">
    <property type="entry name" value="KERATOCAN"/>
    <property type="match status" value="1"/>
</dbReference>
<dbReference type="Pfam" id="PF13516">
    <property type="entry name" value="LRR_6"/>
    <property type="match status" value="1"/>
</dbReference>
<dbReference type="Pfam" id="PF13855">
    <property type="entry name" value="LRR_8"/>
    <property type="match status" value="1"/>
</dbReference>
<dbReference type="Pfam" id="PF01462">
    <property type="entry name" value="LRRNT"/>
    <property type="match status" value="1"/>
</dbReference>
<dbReference type="SMART" id="SM00364">
    <property type="entry name" value="LRR_BAC"/>
    <property type="match status" value="6"/>
</dbReference>
<dbReference type="SMART" id="SM00369">
    <property type="entry name" value="LRR_TYP"/>
    <property type="match status" value="5"/>
</dbReference>
<dbReference type="SMART" id="SM00013">
    <property type="entry name" value="LRRNT"/>
    <property type="match status" value="1"/>
</dbReference>
<dbReference type="SUPFAM" id="SSF52058">
    <property type="entry name" value="L domain-like"/>
    <property type="match status" value="1"/>
</dbReference>
<dbReference type="PROSITE" id="PS51450">
    <property type="entry name" value="LRR"/>
    <property type="match status" value="10"/>
</dbReference>
<organism>
    <name type="scientific">Gallus gallus</name>
    <name type="common">Chicken</name>
    <dbReference type="NCBI Taxonomy" id="9031"/>
    <lineage>
        <taxon>Eukaryota</taxon>
        <taxon>Metazoa</taxon>
        <taxon>Chordata</taxon>
        <taxon>Craniata</taxon>
        <taxon>Vertebrata</taxon>
        <taxon>Euteleostomi</taxon>
        <taxon>Archelosauria</taxon>
        <taxon>Archosauria</taxon>
        <taxon>Dinosauria</taxon>
        <taxon>Saurischia</taxon>
        <taxon>Theropoda</taxon>
        <taxon>Coelurosauria</taxon>
        <taxon>Aves</taxon>
        <taxon>Neognathae</taxon>
        <taxon>Galloanserae</taxon>
        <taxon>Galliformes</taxon>
        <taxon>Phasianidae</taxon>
        <taxon>Phasianinae</taxon>
        <taxon>Gallus</taxon>
    </lineage>
</organism>
<reference key="1">
    <citation type="journal article" date="1998" name="J. Biol. Chem.">
        <title>Identification of the N-linked oligosaccharide sites in chick corneal lumican and keratocan that receive keratan sulfate.</title>
        <authorList>
            <person name="Dunlevy J.R."/>
            <person name="Neame P.J."/>
            <person name="Vergnes J.-P."/>
            <person name="Hassell J.R."/>
        </authorList>
    </citation>
    <scope>NUCLEOTIDE SEQUENCE [MRNA]</scope>
    <scope>PROTEIN SEQUENCE OF 74-92; 212-220 AND 250-267</scope>
    <scope>GLYCOSYLATION AT ASN-94; ASN-223 AND ASN-261</scope>
    <source>
        <tissue>Cornea</tissue>
    </source>
</reference>
<reference key="2">
    <citation type="journal article" date="2000" name="Exp. Eye Res.">
        <title>Expression of the keratan sulfate proteoglycans lumican, keratocan and osteoglycin/mimecan during chick corneal development.</title>
        <authorList>
            <person name="Dunlevy J.R."/>
            <person name="Beales M.P."/>
            <person name="Berryhill B.L."/>
            <person name="Cornuet P.K."/>
            <person name="Hassell J.R."/>
        </authorList>
    </citation>
    <scope>NUCLEOTIDE SEQUENCE [MRNA]</scope>
</reference>
<evidence type="ECO:0000250" key="1">
    <source>
        <dbReference type="UniProtKB" id="P21793"/>
    </source>
</evidence>
<evidence type="ECO:0000255" key="2"/>
<evidence type="ECO:0000269" key="3">
    <source>
    </source>
</evidence>
<evidence type="ECO:0000305" key="4"/>
<sequence>MMTLKVCPSLLLLFLVHSVWTRTVRQVYNELDPEHWSHYTFECPQECFCPPSFPNALYCDNKGLKEIPAIPARIWYLYLQNNLIETISEKPFVNATHLRWINLNKNKITNNGIESGVLSKLKRLLYLFLEDNELEEVPAPLPVGLEQLRLARNKISRIPEGVFSNLENLTMLDLHQNNLLDSALQSDTFQGLNSLMQLNIAKNSLKKMPLSIPANTLQLFLDNNSIEVIPENYFSAIPKVTFLRLNYNKLSDDGIPPNGFNVSSILDLQLSHNQLTKIPPINAHLEHLHLDHNRIKSVNGTQICPVSIAVAEDYGLYGNIPRLRYLRLDGNEIQPPIPLDIMICFQLLQAVVI</sequence>
<gene>
    <name type="primary">KERA</name>
</gene>
<name>KERA_CHICK</name>
<keyword id="KW-0903">Direct protein sequencing</keyword>
<keyword id="KW-1015">Disulfide bond</keyword>
<keyword id="KW-0272">Extracellular matrix</keyword>
<keyword id="KW-0325">Glycoprotein</keyword>
<keyword id="KW-0433">Leucine-rich repeat</keyword>
<keyword id="KW-0654">Proteoglycan</keyword>
<keyword id="KW-1185">Reference proteome</keyword>
<keyword id="KW-0677">Repeat</keyword>
<keyword id="KW-0964">Secreted</keyword>
<keyword id="KW-0732">Signal</keyword>
<accession>O42235</accession>
<feature type="signal peptide" evidence="2">
    <location>
        <begin position="1"/>
        <end position="21"/>
    </location>
</feature>
<feature type="chain" id="PRO_0000032750" description="Keratocan">
    <location>
        <begin position="22"/>
        <end position="353"/>
    </location>
</feature>
<feature type="domain" description="LRRNT">
    <location>
        <begin position="34"/>
        <end position="72"/>
    </location>
</feature>
<feature type="repeat" description="LRR 1">
    <location>
        <begin position="73"/>
        <end position="94"/>
    </location>
</feature>
<feature type="repeat" description="LRR 2">
    <location>
        <begin position="97"/>
        <end position="118"/>
    </location>
</feature>
<feature type="repeat" description="LRR 3">
    <location>
        <begin position="123"/>
        <end position="143"/>
    </location>
</feature>
<feature type="repeat" description="LRR 4">
    <location>
        <begin position="144"/>
        <end position="165"/>
    </location>
</feature>
<feature type="repeat" description="LRR 5">
    <location>
        <begin position="168"/>
        <end position="188"/>
    </location>
</feature>
<feature type="repeat" description="LRR 6">
    <location>
        <begin position="194"/>
        <end position="214"/>
    </location>
</feature>
<feature type="repeat" description="LRR 7">
    <location>
        <begin position="215"/>
        <end position="236"/>
    </location>
</feature>
<feature type="repeat" description="LRR 8">
    <location>
        <begin position="239"/>
        <end position="262"/>
    </location>
</feature>
<feature type="repeat" description="LRR 9">
    <location>
        <begin position="264"/>
        <end position="283"/>
    </location>
</feature>
<feature type="repeat" description="LRR 10">
    <location>
        <begin position="284"/>
        <end position="305"/>
    </location>
</feature>
<feature type="glycosylation site" description="N-linked (GlcNAc...) (keratan sulfate) asparagine" evidence="3">
    <location>
        <position position="94"/>
    </location>
</feature>
<feature type="glycosylation site" description="N-linked (GlcNAc...) asparagine" evidence="2">
    <location>
        <position position="168"/>
    </location>
</feature>
<feature type="glycosylation site" description="N-linked (GlcNAc...) (keratan sulfate) asparagine" evidence="3">
    <location>
        <position position="223"/>
    </location>
</feature>
<feature type="glycosylation site" description="N-linked (GlcNAc...) (keratan sulfate) asparagine" evidence="3">
    <location>
        <position position="261"/>
    </location>
</feature>
<feature type="glycosylation site" description="N-linked (GlcNAc...) asparagine" evidence="2">
    <location>
        <position position="299"/>
    </location>
</feature>
<feature type="disulfide bond" evidence="1">
    <location>
        <begin position="43"/>
        <end position="49"/>
    </location>
</feature>
<feature type="disulfide bond" evidence="1">
    <location>
        <begin position="47"/>
        <end position="59"/>
    </location>
</feature>
<feature type="disulfide bond" evidence="1">
    <location>
        <begin position="304"/>
        <end position="344"/>
    </location>
</feature>